<dbReference type="EC" id="1.8.4.8" evidence="1"/>
<dbReference type="EMBL" id="CU928162">
    <property type="protein sequence ID" value="CAR09227.1"/>
    <property type="molecule type" value="Genomic_DNA"/>
</dbReference>
<dbReference type="RefSeq" id="WP_000039865.1">
    <property type="nucleotide sequence ID" value="NC_011745.1"/>
</dbReference>
<dbReference type="SMR" id="B7MYR0"/>
<dbReference type="KEGG" id="ecq:ECED1_3211"/>
<dbReference type="HOGENOM" id="CLU_044089_3_0_6"/>
<dbReference type="UniPathway" id="UPA00140">
    <property type="reaction ID" value="UER00206"/>
</dbReference>
<dbReference type="Proteomes" id="UP000000748">
    <property type="component" value="Chromosome"/>
</dbReference>
<dbReference type="GO" id="GO:0005737">
    <property type="term" value="C:cytoplasm"/>
    <property type="evidence" value="ECO:0007669"/>
    <property type="project" value="UniProtKB-SubCell"/>
</dbReference>
<dbReference type="GO" id="GO:0004604">
    <property type="term" value="F:phosphoadenylyl-sulfate reductase (thioredoxin) activity"/>
    <property type="evidence" value="ECO:0007669"/>
    <property type="project" value="UniProtKB-UniRule"/>
</dbReference>
<dbReference type="GO" id="GO:0070814">
    <property type="term" value="P:hydrogen sulfide biosynthetic process"/>
    <property type="evidence" value="ECO:0007669"/>
    <property type="project" value="UniProtKB-UniRule"/>
</dbReference>
<dbReference type="GO" id="GO:0019379">
    <property type="term" value="P:sulfate assimilation, phosphoadenylyl sulfate reduction by phosphoadenylyl-sulfate reductase (thioredoxin)"/>
    <property type="evidence" value="ECO:0007669"/>
    <property type="project" value="UniProtKB-UniRule"/>
</dbReference>
<dbReference type="CDD" id="cd23945">
    <property type="entry name" value="PAPS_reductase"/>
    <property type="match status" value="1"/>
</dbReference>
<dbReference type="FunFam" id="3.40.50.620:FF:000043">
    <property type="entry name" value="Phosphoadenosine phosphosulfate reductase"/>
    <property type="match status" value="1"/>
</dbReference>
<dbReference type="Gene3D" id="3.40.50.620">
    <property type="entry name" value="HUPs"/>
    <property type="match status" value="1"/>
</dbReference>
<dbReference type="HAMAP" id="MF_00063">
    <property type="entry name" value="CysH"/>
    <property type="match status" value="1"/>
</dbReference>
<dbReference type="InterPro" id="IPR004511">
    <property type="entry name" value="PAPS/APS_Rdtase"/>
</dbReference>
<dbReference type="InterPro" id="IPR002500">
    <property type="entry name" value="PAPS_reduct_dom"/>
</dbReference>
<dbReference type="InterPro" id="IPR011800">
    <property type="entry name" value="PAPS_reductase_CysH"/>
</dbReference>
<dbReference type="InterPro" id="IPR014729">
    <property type="entry name" value="Rossmann-like_a/b/a_fold"/>
</dbReference>
<dbReference type="NCBIfam" id="TIGR00434">
    <property type="entry name" value="cysH"/>
    <property type="match status" value="1"/>
</dbReference>
<dbReference type="NCBIfam" id="TIGR02057">
    <property type="entry name" value="PAPS_reductase"/>
    <property type="match status" value="1"/>
</dbReference>
<dbReference type="NCBIfam" id="NF002537">
    <property type="entry name" value="PRK02090.1"/>
    <property type="match status" value="1"/>
</dbReference>
<dbReference type="PANTHER" id="PTHR46509">
    <property type="entry name" value="PHOSPHOADENOSINE PHOSPHOSULFATE REDUCTASE"/>
    <property type="match status" value="1"/>
</dbReference>
<dbReference type="PANTHER" id="PTHR46509:SF1">
    <property type="entry name" value="PHOSPHOADENOSINE PHOSPHOSULFATE REDUCTASE"/>
    <property type="match status" value="1"/>
</dbReference>
<dbReference type="Pfam" id="PF01507">
    <property type="entry name" value="PAPS_reduct"/>
    <property type="match status" value="1"/>
</dbReference>
<dbReference type="PIRSF" id="PIRSF000857">
    <property type="entry name" value="PAPS_reductase"/>
    <property type="match status" value="1"/>
</dbReference>
<dbReference type="SUPFAM" id="SSF52402">
    <property type="entry name" value="Adenine nucleotide alpha hydrolases-like"/>
    <property type="match status" value="1"/>
</dbReference>
<proteinExistence type="inferred from homology"/>
<accession>B7MYR0</accession>
<name>CYSH_ECO81</name>
<sequence length="244" mass="28003">MSKLDLNALNELPKVDRILALAETNAQLEKLDAEGRVAWALDNLPGEYVLSSSFGIQAAVSLHLVNQIRPDIPVILTDTGYLFPETYRFIDELTDKLKLNLKVYRATESAAWQEARYGKLWEQGVEGIEKYNDINKVEPMNRALKELNVQTWFAGLRREQSGSRANLPVLAIQRGVFKVLPIIDWDNRTIYQYLQKHGLKYHPLWDEGYLSVGDTHTTRKWEPGMAEEETRFFGLKRECGLHEG</sequence>
<evidence type="ECO:0000255" key="1">
    <source>
        <dbReference type="HAMAP-Rule" id="MF_00063"/>
    </source>
</evidence>
<comment type="function">
    <text evidence="1">Catalyzes the formation of sulfite from phosphoadenosine 5'-phosphosulfate (PAPS) using thioredoxin as an electron donor.</text>
</comment>
<comment type="catalytic activity">
    <reaction evidence="1">
        <text>[thioredoxin]-disulfide + sulfite + adenosine 3',5'-bisphosphate + 2 H(+) = [thioredoxin]-dithiol + 3'-phosphoadenylyl sulfate</text>
        <dbReference type="Rhea" id="RHEA:11724"/>
        <dbReference type="Rhea" id="RHEA-COMP:10698"/>
        <dbReference type="Rhea" id="RHEA-COMP:10700"/>
        <dbReference type="ChEBI" id="CHEBI:15378"/>
        <dbReference type="ChEBI" id="CHEBI:17359"/>
        <dbReference type="ChEBI" id="CHEBI:29950"/>
        <dbReference type="ChEBI" id="CHEBI:50058"/>
        <dbReference type="ChEBI" id="CHEBI:58339"/>
        <dbReference type="ChEBI" id="CHEBI:58343"/>
        <dbReference type="EC" id="1.8.4.8"/>
    </reaction>
</comment>
<comment type="pathway">
    <text evidence="1">Sulfur metabolism; hydrogen sulfide biosynthesis; sulfite from sulfate: step 3/3.</text>
</comment>
<comment type="subcellular location">
    <subcellularLocation>
        <location evidence="1">Cytoplasm</location>
    </subcellularLocation>
</comment>
<comment type="similarity">
    <text evidence="1">Belongs to the PAPS reductase family. CysH subfamily.</text>
</comment>
<feature type="chain" id="PRO_1000117929" description="Phosphoadenosine 5'-phosphosulfate reductase">
    <location>
        <begin position="1"/>
        <end position="244"/>
    </location>
</feature>
<feature type="active site" description="Nucleophile; cysteine thiosulfonate intermediate" evidence="1">
    <location>
        <position position="239"/>
    </location>
</feature>
<protein>
    <recommendedName>
        <fullName evidence="1">Phosphoadenosine 5'-phosphosulfate reductase</fullName>
        <shortName evidence="1">PAPS reductase</shortName>
        <ecNumber evidence="1">1.8.4.8</ecNumber>
    </recommendedName>
    <alternativeName>
        <fullName evidence="1">3'-phosphoadenylylsulfate reductase</fullName>
    </alternativeName>
    <alternativeName>
        <fullName evidence="1">PAPS reductase, thioredoxin dependent</fullName>
    </alternativeName>
    <alternativeName>
        <fullName evidence="1">PAPS sulfotransferase</fullName>
    </alternativeName>
    <alternativeName>
        <fullName evidence="1">PAdoPS reductase</fullName>
    </alternativeName>
</protein>
<organism>
    <name type="scientific">Escherichia coli O81 (strain ED1a)</name>
    <dbReference type="NCBI Taxonomy" id="585397"/>
    <lineage>
        <taxon>Bacteria</taxon>
        <taxon>Pseudomonadati</taxon>
        <taxon>Pseudomonadota</taxon>
        <taxon>Gammaproteobacteria</taxon>
        <taxon>Enterobacterales</taxon>
        <taxon>Enterobacteriaceae</taxon>
        <taxon>Escherichia</taxon>
    </lineage>
</organism>
<gene>
    <name evidence="1" type="primary">cysH</name>
    <name type="ordered locus">ECED1_3211</name>
</gene>
<reference key="1">
    <citation type="journal article" date="2009" name="PLoS Genet.">
        <title>Organised genome dynamics in the Escherichia coli species results in highly diverse adaptive paths.</title>
        <authorList>
            <person name="Touchon M."/>
            <person name="Hoede C."/>
            <person name="Tenaillon O."/>
            <person name="Barbe V."/>
            <person name="Baeriswyl S."/>
            <person name="Bidet P."/>
            <person name="Bingen E."/>
            <person name="Bonacorsi S."/>
            <person name="Bouchier C."/>
            <person name="Bouvet O."/>
            <person name="Calteau A."/>
            <person name="Chiapello H."/>
            <person name="Clermont O."/>
            <person name="Cruveiller S."/>
            <person name="Danchin A."/>
            <person name="Diard M."/>
            <person name="Dossat C."/>
            <person name="Karoui M.E."/>
            <person name="Frapy E."/>
            <person name="Garry L."/>
            <person name="Ghigo J.M."/>
            <person name="Gilles A.M."/>
            <person name="Johnson J."/>
            <person name="Le Bouguenec C."/>
            <person name="Lescat M."/>
            <person name="Mangenot S."/>
            <person name="Martinez-Jehanne V."/>
            <person name="Matic I."/>
            <person name="Nassif X."/>
            <person name="Oztas S."/>
            <person name="Petit M.A."/>
            <person name="Pichon C."/>
            <person name="Rouy Z."/>
            <person name="Ruf C.S."/>
            <person name="Schneider D."/>
            <person name="Tourret J."/>
            <person name="Vacherie B."/>
            <person name="Vallenet D."/>
            <person name="Medigue C."/>
            <person name="Rocha E.P.C."/>
            <person name="Denamur E."/>
        </authorList>
    </citation>
    <scope>NUCLEOTIDE SEQUENCE [LARGE SCALE GENOMIC DNA]</scope>
    <source>
        <strain>ED1a</strain>
    </source>
</reference>
<keyword id="KW-0963">Cytoplasm</keyword>
<keyword id="KW-0560">Oxidoreductase</keyword>